<keyword id="KW-1185">Reference proteome</keyword>
<keyword id="KW-0687">Ribonucleoprotein</keyword>
<keyword id="KW-0689">Ribosomal protein</keyword>
<keyword id="KW-0694">RNA-binding</keyword>
<keyword id="KW-0699">rRNA-binding</keyword>
<organism>
    <name type="scientific">Delftia acidovorans (strain DSM 14801 / SPH-1)</name>
    <dbReference type="NCBI Taxonomy" id="398578"/>
    <lineage>
        <taxon>Bacteria</taxon>
        <taxon>Pseudomonadati</taxon>
        <taxon>Pseudomonadota</taxon>
        <taxon>Betaproteobacteria</taxon>
        <taxon>Burkholderiales</taxon>
        <taxon>Comamonadaceae</taxon>
        <taxon>Delftia</taxon>
    </lineage>
</organism>
<dbReference type="EMBL" id="CP000884">
    <property type="protein sequence ID" value="ABX33685.1"/>
    <property type="molecule type" value="Genomic_DNA"/>
</dbReference>
<dbReference type="RefSeq" id="WP_012202971.1">
    <property type="nucleotide sequence ID" value="NC_010002.1"/>
</dbReference>
<dbReference type="SMR" id="A9BRW8"/>
<dbReference type="STRING" id="398578.Daci_1039"/>
<dbReference type="GeneID" id="24115113"/>
<dbReference type="KEGG" id="dac:Daci_1039"/>
<dbReference type="eggNOG" id="COG0098">
    <property type="taxonomic scope" value="Bacteria"/>
</dbReference>
<dbReference type="HOGENOM" id="CLU_065898_2_2_4"/>
<dbReference type="Proteomes" id="UP000000784">
    <property type="component" value="Chromosome"/>
</dbReference>
<dbReference type="GO" id="GO:0015935">
    <property type="term" value="C:small ribosomal subunit"/>
    <property type="evidence" value="ECO:0007669"/>
    <property type="project" value="InterPro"/>
</dbReference>
<dbReference type="GO" id="GO:0019843">
    <property type="term" value="F:rRNA binding"/>
    <property type="evidence" value="ECO:0007669"/>
    <property type="project" value="UniProtKB-UniRule"/>
</dbReference>
<dbReference type="GO" id="GO:0003735">
    <property type="term" value="F:structural constituent of ribosome"/>
    <property type="evidence" value="ECO:0007669"/>
    <property type="project" value="InterPro"/>
</dbReference>
<dbReference type="GO" id="GO:0006412">
    <property type="term" value="P:translation"/>
    <property type="evidence" value="ECO:0007669"/>
    <property type="project" value="UniProtKB-UniRule"/>
</dbReference>
<dbReference type="FunFam" id="3.30.160.20:FF:000001">
    <property type="entry name" value="30S ribosomal protein S5"/>
    <property type="match status" value="1"/>
</dbReference>
<dbReference type="FunFam" id="3.30.230.10:FF:000002">
    <property type="entry name" value="30S ribosomal protein S5"/>
    <property type="match status" value="1"/>
</dbReference>
<dbReference type="Gene3D" id="3.30.160.20">
    <property type="match status" value="1"/>
</dbReference>
<dbReference type="Gene3D" id="3.30.230.10">
    <property type="match status" value="1"/>
</dbReference>
<dbReference type="HAMAP" id="MF_01307_B">
    <property type="entry name" value="Ribosomal_uS5_B"/>
    <property type="match status" value="1"/>
</dbReference>
<dbReference type="InterPro" id="IPR020568">
    <property type="entry name" value="Ribosomal_Su5_D2-typ_SF"/>
</dbReference>
<dbReference type="InterPro" id="IPR000851">
    <property type="entry name" value="Ribosomal_uS5"/>
</dbReference>
<dbReference type="InterPro" id="IPR005712">
    <property type="entry name" value="Ribosomal_uS5_bac-type"/>
</dbReference>
<dbReference type="InterPro" id="IPR005324">
    <property type="entry name" value="Ribosomal_uS5_C"/>
</dbReference>
<dbReference type="InterPro" id="IPR013810">
    <property type="entry name" value="Ribosomal_uS5_N"/>
</dbReference>
<dbReference type="InterPro" id="IPR018192">
    <property type="entry name" value="Ribosomal_uS5_N_CS"/>
</dbReference>
<dbReference type="InterPro" id="IPR014721">
    <property type="entry name" value="Ribsml_uS5_D2-typ_fold_subgr"/>
</dbReference>
<dbReference type="NCBIfam" id="TIGR01021">
    <property type="entry name" value="rpsE_bact"/>
    <property type="match status" value="1"/>
</dbReference>
<dbReference type="PANTHER" id="PTHR48277">
    <property type="entry name" value="MITOCHONDRIAL RIBOSOMAL PROTEIN S5"/>
    <property type="match status" value="1"/>
</dbReference>
<dbReference type="PANTHER" id="PTHR48277:SF1">
    <property type="entry name" value="MITOCHONDRIAL RIBOSOMAL PROTEIN S5"/>
    <property type="match status" value="1"/>
</dbReference>
<dbReference type="Pfam" id="PF00333">
    <property type="entry name" value="Ribosomal_S5"/>
    <property type="match status" value="1"/>
</dbReference>
<dbReference type="Pfam" id="PF03719">
    <property type="entry name" value="Ribosomal_S5_C"/>
    <property type="match status" value="1"/>
</dbReference>
<dbReference type="SUPFAM" id="SSF54768">
    <property type="entry name" value="dsRNA-binding domain-like"/>
    <property type="match status" value="1"/>
</dbReference>
<dbReference type="SUPFAM" id="SSF54211">
    <property type="entry name" value="Ribosomal protein S5 domain 2-like"/>
    <property type="match status" value="1"/>
</dbReference>
<dbReference type="PROSITE" id="PS00585">
    <property type="entry name" value="RIBOSOMAL_S5"/>
    <property type="match status" value="1"/>
</dbReference>
<dbReference type="PROSITE" id="PS50881">
    <property type="entry name" value="S5_DSRBD"/>
    <property type="match status" value="1"/>
</dbReference>
<comment type="function">
    <text evidence="1">With S4 and S12 plays an important role in translational accuracy.</text>
</comment>
<comment type="function">
    <text evidence="1">Located at the back of the 30S subunit body where it stabilizes the conformation of the head with respect to the body.</text>
</comment>
<comment type="subunit">
    <text evidence="1">Part of the 30S ribosomal subunit. Contacts proteins S4 and S8.</text>
</comment>
<comment type="domain">
    <text>The N-terminal domain interacts with the head of the 30S subunit; the C-terminal domain interacts with the body and contacts protein S4. The interaction surface between S4 and S5 is involved in control of translational fidelity.</text>
</comment>
<comment type="similarity">
    <text evidence="1">Belongs to the universal ribosomal protein uS5 family.</text>
</comment>
<gene>
    <name evidence="1" type="primary">rpsE</name>
    <name type="ordered locus">Daci_1039</name>
</gene>
<sequence>MAKFSPKVQDEGRDDGLREKMIAVNRVTKVVKGGRILGFAALTVVGDGDGRVGMGKGKSKEVPAAVQKAMEESRRNMIKVSLKHGTIHHTVMGQHGAASVMLNPAPKGTGIIAGGPMRAVFEVLGITDIVAKSHGSSNPYNMVRATFDALKHSTTPSEVAAKRGKSVEDIFTA</sequence>
<name>RS5_DELAS</name>
<protein>
    <recommendedName>
        <fullName evidence="1">Small ribosomal subunit protein uS5</fullName>
    </recommendedName>
    <alternativeName>
        <fullName evidence="2">30S ribosomal protein S5</fullName>
    </alternativeName>
</protein>
<feature type="chain" id="PRO_1000140855" description="Small ribosomal subunit protein uS5">
    <location>
        <begin position="1"/>
        <end position="173"/>
    </location>
</feature>
<feature type="domain" description="S5 DRBM" evidence="1">
    <location>
        <begin position="17"/>
        <end position="80"/>
    </location>
</feature>
<reference key="1">
    <citation type="submission" date="2007-11" db="EMBL/GenBank/DDBJ databases">
        <title>Complete sequence of Delftia acidovorans DSM 14801 / SPH-1.</title>
        <authorList>
            <person name="Copeland A."/>
            <person name="Lucas S."/>
            <person name="Lapidus A."/>
            <person name="Barry K."/>
            <person name="Glavina del Rio T."/>
            <person name="Dalin E."/>
            <person name="Tice H."/>
            <person name="Pitluck S."/>
            <person name="Lowry S."/>
            <person name="Clum A."/>
            <person name="Schmutz J."/>
            <person name="Larimer F."/>
            <person name="Land M."/>
            <person name="Hauser L."/>
            <person name="Kyrpides N."/>
            <person name="Kim E."/>
            <person name="Schleheck D."/>
            <person name="Richardson P."/>
        </authorList>
    </citation>
    <scope>NUCLEOTIDE SEQUENCE [LARGE SCALE GENOMIC DNA]</scope>
    <source>
        <strain>DSM 14801 / SPH-1</strain>
    </source>
</reference>
<proteinExistence type="inferred from homology"/>
<evidence type="ECO:0000255" key="1">
    <source>
        <dbReference type="HAMAP-Rule" id="MF_01307"/>
    </source>
</evidence>
<evidence type="ECO:0000305" key="2"/>
<accession>A9BRW8</accession>